<proteinExistence type="inferred from homology"/>
<dbReference type="EMBL" id="AF251144">
    <property type="protein sequence ID" value="AAG39339.1"/>
    <property type="molecule type" value="Genomic_RNA"/>
</dbReference>
<dbReference type="SMR" id="Q9DQX6"/>
<dbReference type="GO" id="GO:0044172">
    <property type="term" value="C:host cell endoplasmic reticulum-Golgi intermediate compartment"/>
    <property type="evidence" value="ECO:0007669"/>
    <property type="project" value="UniProtKB-SubCell"/>
</dbReference>
<dbReference type="GO" id="GO:0044177">
    <property type="term" value="C:host cell Golgi apparatus"/>
    <property type="evidence" value="ECO:0007669"/>
    <property type="project" value="UniProtKB-SubCell"/>
</dbReference>
<dbReference type="GO" id="GO:1990904">
    <property type="term" value="C:ribonucleoprotein complex"/>
    <property type="evidence" value="ECO:0007669"/>
    <property type="project" value="UniProtKB-KW"/>
</dbReference>
<dbReference type="GO" id="GO:0019013">
    <property type="term" value="C:viral nucleocapsid"/>
    <property type="evidence" value="ECO:0007669"/>
    <property type="project" value="UniProtKB-UniRule"/>
</dbReference>
<dbReference type="GO" id="GO:0003723">
    <property type="term" value="F:RNA binding"/>
    <property type="evidence" value="ECO:0007669"/>
    <property type="project" value="UniProtKB-UniRule"/>
</dbReference>
<dbReference type="CDD" id="cd21595">
    <property type="entry name" value="CoV_N-CTD"/>
    <property type="match status" value="1"/>
</dbReference>
<dbReference type="CDD" id="cd21554">
    <property type="entry name" value="CoV_N-NTD"/>
    <property type="match status" value="1"/>
</dbReference>
<dbReference type="HAMAP" id="MF_04096">
    <property type="entry name" value="BETA_CORONA_NCAP"/>
    <property type="match status" value="1"/>
</dbReference>
<dbReference type="InterPro" id="IPR044344">
    <property type="entry name" value="N_prot_C_CoV"/>
</dbReference>
<dbReference type="InterPro" id="IPR044345">
    <property type="entry name" value="N_prot_N_CoV"/>
</dbReference>
<dbReference type="InterPro" id="IPR043505">
    <property type="entry name" value="NCAP_bCoV"/>
</dbReference>
<dbReference type="InterPro" id="IPR001218">
    <property type="entry name" value="Nucleocap_CoV"/>
</dbReference>
<dbReference type="InterPro" id="IPR037179">
    <property type="entry name" value="Nucleocapsid_C"/>
</dbReference>
<dbReference type="InterPro" id="IPR037195">
    <property type="entry name" value="Nucleocapsid_N"/>
</dbReference>
<dbReference type="Pfam" id="PF00937">
    <property type="entry name" value="CoV_nucleocap"/>
    <property type="match status" value="1"/>
</dbReference>
<dbReference type="PIRSF" id="PIRSF003888">
    <property type="entry name" value="Corona_nucleocap"/>
    <property type="match status" value="1"/>
</dbReference>
<dbReference type="SUPFAM" id="SSF110304">
    <property type="entry name" value="Coronavirus RNA-binding domain"/>
    <property type="match status" value="1"/>
</dbReference>
<dbReference type="SUPFAM" id="SSF103068">
    <property type="entry name" value="Nucleocapsid protein dimerization domain"/>
    <property type="match status" value="1"/>
</dbReference>
<dbReference type="PROSITE" id="PS51929">
    <property type="entry name" value="COV_N_CTD"/>
    <property type="match status" value="1"/>
</dbReference>
<dbReference type="PROSITE" id="PS51928">
    <property type="entry name" value="COV_N_NTD"/>
    <property type="match status" value="1"/>
</dbReference>
<feature type="chain" id="PRO_0000105999" description="Nucleoprotein">
    <location>
        <begin position="1"/>
        <end position="446"/>
    </location>
</feature>
<feature type="domain" description="CoV N NTD" evidence="3">
    <location>
        <begin position="60"/>
        <end position="189"/>
    </location>
</feature>
<feature type="domain" description="CoV N CTD" evidence="4">
    <location>
        <begin position="258"/>
        <end position="383"/>
    </location>
</feature>
<feature type="region of interest" description="Disordered" evidence="5">
    <location>
        <begin position="1"/>
        <end position="54"/>
    </location>
</feature>
<feature type="region of interest" description="RNA-binding" evidence="2">
    <location>
        <begin position="52"/>
        <end position="193"/>
    </location>
</feature>
<feature type="region of interest" description="Disordered" evidence="5">
    <location>
        <begin position="157"/>
        <end position="230"/>
    </location>
</feature>
<feature type="region of interest" description="Dimerization" evidence="2">
    <location>
        <begin position="265"/>
        <end position="384"/>
    </location>
</feature>
<feature type="region of interest" description="Disordered" evidence="5">
    <location>
        <begin position="265"/>
        <end position="290"/>
    </location>
</feature>
<feature type="region of interest" description="Disordered" evidence="5">
    <location>
        <begin position="381"/>
        <end position="446"/>
    </location>
</feature>
<feature type="compositionally biased region" description="Low complexity" evidence="5">
    <location>
        <begin position="9"/>
        <end position="22"/>
    </location>
</feature>
<feature type="compositionally biased region" description="Polar residues" evidence="5">
    <location>
        <begin position="29"/>
        <end position="38"/>
    </location>
</feature>
<feature type="compositionally biased region" description="Polar residues" evidence="5">
    <location>
        <begin position="45"/>
        <end position="54"/>
    </location>
</feature>
<feature type="compositionally biased region" description="Low complexity" evidence="5">
    <location>
        <begin position="195"/>
        <end position="226"/>
    </location>
</feature>
<feature type="compositionally biased region" description="Basic residues" evidence="5">
    <location>
        <begin position="265"/>
        <end position="275"/>
    </location>
</feature>
<feature type="binding site" evidence="1">
    <location>
        <position position="105"/>
    </location>
    <ligand>
        <name>RNA</name>
        <dbReference type="ChEBI" id="CHEBI:33697"/>
    </ligand>
</feature>
<feature type="binding site" evidence="1">
    <location>
        <position position="121"/>
    </location>
    <ligand>
        <name>RNA</name>
        <dbReference type="ChEBI" id="CHEBI:33697"/>
    </ligand>
</feature>
<feature type="binding site" evidence="1">
    <location>
        <position position="163"/>
    </location>
    <ligand>
        <name>RNA</name>
        <dbReference type="ChEBI" id="CHEBI:33697"/>
    </ligand>
</feature>
<feature type="modified residue" description="Phosphoserine; by host" evidence="2">
    <location>
        <position position="166"/>
    </location>
</feature>
<feature type="modified residue" description="Phosphothreonine; by host" evidence="2">
    <location>
        <position position="173"/>
    </location>
</feature>
<feature type="modified residue" description="Phosphoserine; by host" evidence="2">
    <location>
        <position position="190"/>
    </location>
</feature>
<feature type="modified residue" description="Phosphoserine; by host" evidence="2">
    <location>
        <position position="389"/>
    </location>
</feature>
<feature type="modified residue" description="Phosphoserine; by host" evidence="2">
    <location>
        <position position="421"/>
    </location>
</feature>
<feature type="modified residue" description="Phosphothreonine; by host" evidence="2">
    <location>
        <position position="425"/>
    </location>
</feature>
<reference key="1">
    <citation type="journal article" date="2000" name="J. Clin. Microbiol.">
        <title>Characterization of a coronavirus isolated from a diarrheic foal.</title>
        <authorList>
            <person name="Guy J.S."/>
            <person name="Breslin J.J."/>
            <person name="Breuhaus B."/>
            <person name="Vivrette S."/>
            <person name="Smith L.G."/>
        </authorList>
    </citation>
    <scope>NUCLEOTIDE SEQUENCE [GENOMIC RNA]</scope>
</reference>
<accession>Q9DQX6</accession>
<organism>
    <name type="scientific">Equine coronavirus (isolate NC99)</name>
    <name type="common">ECoV</name>
    <dbReference type="NCBI Taxonomy" id="202496"/>
    <lineage>
        <taxon>Viruses</taxon>
        <taxon>Riboviria</taxon>
        <taxon>Orthornavirae</taxon>
        <taxon>Pisuviricota</taxon>
        <taxon>Pisoniviricetes</taxon>
        <taxon>Nidovirales</taxon>
        <taxon>Cornidovirineae</taxon>
        <taxon>Coronaviridae</taxon>
        <taxon>Orthocoronavirinae</taxon>
        <taxon>Betacoronavirus</taxon>
        <taxon>Embecovirus</taxon>
        <taxon>Betacoronavirus 1</taxon>
    </lineage>
</organism>
<comment type="function">
    <text evidence="2">Packages the positive strand viral genome RNA into a helical ribonucleocapsid (RNP) and plays a fundamental role during virion assembly through its interactions with the viral genome and membrane protein M. Plays an important role in enhancing the efficiency of subgenomic viral RNA transcription as well as viral replication.</text>
</comment>
<comment type="subunit">
    <text evidence="2">Homooligomer. Both monomeric and oligomeric forms interact with RNA. Interacts with protein M. Interacts with NSP3; this interaction serves to tether the genome to the newly translated replicase-transcriptase complex at a very early stage of infection.</text>
</comment>
<comment type="subcellular location">
    <subcellularLocation>
        <location evidence="2">Virion</location>
    </subcellularLocation>
    <subcellularLocation>
        <location evidence="2">Host endoplasmic reticulum-Golgi intermediate compartment</location>
    </subcellularLocation>
    <subcellularLocation>
        <location evidence="2">Host Golgi apparatus</location>
    </subcellularLocation>
    <text evidence="2">Located inside the virion, complexed with the viral RNA. Probably associates with ER-derived membranes where it participates in viral RNA synthesis and virus budding.</text>
</comment>
<comment type="PTM">
    <text evidence="2">ADP-ribosylated. The ADP-ribosylation is retained in the virion during infection.</text>
</comment>
<comment type="PTM">
    <text evidence="2">Phosphorylated on serine and threonine residues.</text>
</comment>
<comment type="similarity">
    <text evidence="2">Belongs to the betacoronavirus nucleocapsid protein family.</text>
</comment>
<evidence type="ECO:0000250" key="1">
    <source>
        <dbReference type="UniProtKB" id="P0DTC9"/>
    </source>
</evidence>
<evidence type="ECO:0000255" key="2">
    <source>
        <dbReference type="HAMAP-Rule" id="MF_04096"/>
    </source>
</evidence>
<evidence type="ECO:0000255" key="3">
    <source>
        <dbReference type="PROSITE-ProRule" id="PRU01276"/>
    </source>
</evidence>
<evidence type="ECO:0000255" key="4">
    <source>
        <dbReference type="PROSITE-ProRule" id="PRU01277"/>
    </source>
</evidence>
<evidence type="ECO:0000256" key="5">
    <source>
        <dbReference type="SAM" id="MobiDB-lite"/>
    </source>
</evidence>
<name>NCAP_CVEN9</name>
<organismHost>
    <name type="scientific">Equus caballus</name>
    <name type="common">Horse</name>
    <dbReference type="NCBI Taxonomy" id="9796"/>
</organismHost>
<gene>
    <name evidence="2" type="primary">N</name>
</gene>
<sequence length="446" mass="49014">MSFTPGKQSSSRASSGNRAGNGILKWADQSDQSSNFQTRGRRAQPKQTATSQPAGGNVVPYYSWFSGITQFQKGKEFQFAEGQGVPIAPGIPATEAKGYWYRHNRRSFKTADGNQRQLLPRWYFYYLGTGPHAKAQYGTNIDGVFWVANKQADVNTPADVVDRDPSSDEAIPTRFPPGTVLPQGYYIEGSGRSVPNSRSTSRASSRASSAGSRNRSNSGTRTPTSGVTSDMADQIASLVLAKLGKDATKPQQVTKQTAKEVRQKILNKPRQKRSPNKQCTVQQCFGKRGPNQNFGGAEMLKLGTSDPQFPILAELAPTAGAFFFGSRLELAKVQNLSGNFDEPQKDVYELRYNGAIRFDSTLPGFETIMKVLNENLNAYQQQDDGTNMSPKPQRQRGQQKGGENEDVSVAAPKSRVQQNKSRELTAEDISLVKQMDDPLTEDNSEM</sequence>
<keyword id="KW-0013">ADP-ribosylation</keyword>
<keyword id="KW-1040">Host Golgi apparatus</keyword>
<keyword id="KW-0597">Phosphoprotein</keyword>
<keyword id="KW-0687">Ribonucleoprotein</keyword>
<keyword id="KW-0694">RNA-binding</keyword>
<keyword id="KW-0804">Transcription</keyword>
<keyword id="KW-0805">Transcription regulation</keyword>
<keyword id="KW-0543">Viral nucleoprotein</keyword>
<keyword id="KW-0946">Virion</keyword>
<protein>
    <recommendedName>
        <fullName evidence="2">Nucleoprotein</fullName>
    </recommendedName>
    <alternativeName>
        <fullName evidence="2">Nucleocapsid protein</fullName>
        <shortName evidence="2">NC</shortName>
        <shortName evidence="2">Protein N</shortName>
    </alternativeName>
</protein>